<dbReference type="EMBL" id="CP000394">
    <property type="protein sequence ID" value="ABI61910.1"/>
    <property type="molecule type" value="Genomic_DNA"/>
</dbReference>
<dbReference type="RefSeq" id="WP_011631719.1">
    <property type="nucleotide sequence ID" value="NC_008343.2"/>
</dbReference>
<dbReference type="SMR" id="Q0BTE2"/>
<dbReference type="STRING" id="391165.GbCGDNIH1_1012"/>
<dbReference type="GeneID" id="69745271"/>
<dbReference type="KEGG" id="gbe:GbCGDNIH1_1012"/>
<dbReference type="eggNOG" id="COG0333">
    <property type="taxonomic scope" value="Bacteria"/>
</dbReference>
<dbReference type="HOGENOM" id="CLU_129084_1_3_5"/>
<dbReference type="OrthoDB" id="9801927at2"/>
<dbReference type="Proteomes" id="UP000001963">
    <property type="component" value="Chromosome"/>
</dbReference>
<dbReference type="GO" id="GO:0015934">
    <property type="term" value="C:large ribosomal subunit"/>
    <property type="evidence" value="ECO:0007669"/>
    <property type="project" value="InterPro"/>
</dbReference>
<dbReference type="GO" id="GO:0003735">
    <property type="term" value="F:structural constituent of ribosome"/>
    <property type="evidence" value="ECO:0007669"/>
    <property type="project" value="InterPro"/>
</dbReference>
<dbReference type="GO" id="GO:0006412">
    <property type="term" value="P:translation"/>
    <property type="evidence" value="ECO:0007669"/>
    <property type="project" value="UniProtKB-UniRule"/>
</dbReference>
<dbReference type="Gene3D" id="1.20.5.640">
    <property type="entry name" value="Single helix bin"/>
    <property type="match status" value="1"/>
</dbReference>
<dbReference type="HAMAP" id="MF_00340">
    <property type="entry name" value="Ribosomal_bL32"/>
    <property type="match status" value="1"/>
</dbReference>
<dbReference type="InterPro" id="IPR002677">
    <property type="entry name" value="Ribosomal_bL32"/>
</dbReference>
<dbReference type="InterPro" id="IPR044957">
    <property type="entry name" value="Ribosomal_bL32_bact"/>
</dbReference>
<dbReference type="InterPro" id="IPR011332">
    <property type="entry name" value="Ribosomal_zn-bd"/>
</dbReference>
<dbReference type="NCBIfam" id="TIGR01031">
    <property type="entry name" value="rpmF_bact"/>
    <property type="match status" value="1"/>
</dbReference>
<dbReference type="PANTHER" id="PTHR35534">
    <property type="entry name" value="50S RIBOSOMAL PROTEIN L32"/>
    <property type="match status" value="1"/>
</dbReference>
<dbReference type="PANTHER" id="PTHR35534:SF1">
    <property type="entry name" value="LARGE RIBOSOMAL SUBUNIT PROTEIN BL32"/>
    <property type="match status" value="1"/>
</dbReference>
<dbReference type="Pfam" id="PF01783">
    <property type="entry name" value="Ribosomal_L32p"/>
    <property type="match status" value="1"/>
</dbReference>
<dbReference type="SUPFAM" id="SSF57829">
    <property type="entry name" value="Zn-binding ribosomal proteins"/>
    <property type="match status" value="1"/>
</dbReference>
<gene>
    <name evidence="1" type="primary">rpmF</name>
    <name type="ordered locus">GbCGDNIH1_1012</name>
</gene>
<sequence>MAVPKKKTSPSRRGMRRSHQALTGEAYTECSNCGELKRPHHVCGHCGHYDGREVAAAGNSGRGLKGVVRV</sequence>
<reference key="1">
    <citation type="journal article" date="2007" name="J. Bacteriol.">
        <title>Genome sequence analysis of the emerging human pathogenic acetic acid bacterium Granulibacter bethesdensis.</title>
        <authorList>
            <person name="Greenberg D.E."/>
            <person name="Porcella S.F."/>
            <person name="Zelazny A.M."/>
            <person name="Virtaneva K."/>
            <person name="Sturdevant D.E."/>
            <person name="Kupko J.J. III"/>
            <person name="Barbian K.D."/>
            <person name="Babar A."/>
            <person name="Dorward D.W."/>
            <person name="Holland S.M."/>
        </authorList>
    </citation>
    <scope>NUCLEOTIDE SEQUENCE [LARGE SCALE GENOMIC DNA]</scope>
    <source>
        <strain>ATCC BAA-1260 / CGDNIH1</strain>
    </source>
</reference>
<comment type="similarity">
    <text evidence="1">Belongs to the bacterial ribosomal protein bL32 family.</text>
</comment>
<protein>
    <recommendedName>
        <fullName evidence="1">Large ribosomal subunit protein bL32</fullName>
    </recommendedName>
    <alternativeName>
        <fullName evidence="3">50S ribosomal protein L32</fullName>
    </alternativeName>
</protein>
<accession>Q0BTE2</accession>
<evidence type="ECO:0000255" key="1">
    <source>
        <dbReference type="HAMAP-Rule" id="MF_00340"/>
    </source>
</evidence>
<evidence type="ECO:0000256" key="2">
    <source>
        <dbReference type="SAM" id="MobiDB-lite"/>
    </source>
</evidence>
<evidence type="ECO:0000305" key="3"/>
<feature type="chain" id="PRO_0000296473" description="Large ribosomal subunit protein bL32">
    <location>
        <begin position="1"/>
        <end position="70"/>
    </location>
</feature>
<feature type="region of interest" description="Disordered" evidence="2">
    <location>
        <begin position="1"/>
        <end position="21"/>
    </location>
</feature>
<feature type="compositionally biased region" description="Basic residues" evidence="2">
    <location>
        <begin position="1"/>
        <end position="19"/>
    </location>
</feature>
<keyword id="KW-1185">Reference proteome</keyword>
<keyword id="KW-0687">Ribonucleoprotein</keyword>
<keyword id="KW-0689">Ribosomal protein</keyword>
<proteinExistence type="inferred from homology"/>
<organism>
    <name type="scientific">Granulibacter bethesdensis (strain ATCC BAA-1260 / CGDNIH1)</name>
    <dbReference type="NCBI Taxonomy" id="391165"/>
    <lineage>
        <taxon>Bacteria</taxon>
        <taxon>Pseudomonadati</taxon>
        <taxon>Pseudomonadota</taxon>
        <taxon>Alphaproteobacteria</taxon>
        <taxon>Acetobacterales</taxon>
        <taxon>Acetobacteraceae</taxon>
        <taxon>Granulibacter</taxon>
    </lineage>
</organism>
<name>RL32_GRABC</name>